<gene>
    <name type="primary">CRYAA</name>
</gene>
<reference key="1">
    <citation type="book" date="1993" name="Mammal phylogeny: placentals">
        <title>Eye lens crystallins and the phylogeny of placental orders: evidence for a macroscelid-paenungulate clade?</title>
        <editorList>
            <person name="Szalay F.S."/>
            <person name="Novacek M.J."/>
            <person name="McKenna M.C."/>
        </editorList>
        <authorList>
            <person name="de Jong W.W."/>
            <person name="Leunissen J.A.M."/>
            <person name="Wistow G.J."/>
        </authorList>
    </citation>
    <scope>PROTEIN SEQUENCE</scope>
</reference>
<dbReference type="GlyCosmos" id="P82530">
    <property type="glycosylation" value="1 site, No reported glycans"/>
</dbReference>
<dbReference type="GO" id="GO:0005737">
    <property type="term" value="C:cytoplasm"/>
    <property type="evidence" value="ECO:0000250"/>
    <property type="project" value="UniProtKB"/>
</dbReference>
<dbReference type="GO" id="GO:0005634">
    <property type="term" value="C:nucleus"/>
    <property type="evidence" value="ECO:0000250"/>
    <property type="project" value="UniProtKB"/>
</dbReference>
<dbReference type="GO" id="GO:0046872">
    <property type="term" value="F:metal ion binding"/>
    <property type="evidence" value="ECO:0007669"/>
    <property type="project" value="UniProtKB-KW"/>
</dbReference>
<dbReference type="GO" id="GO:0005212">
    <property type="term" value="F:structural constituent of eye lens"/>
    <property type="evidence" value="ECO:0007669"/>
    <property type="project" value="UniProtKB-KW"/>
</dbReference>
<dbReference type="GO" id="GO:0051082">
    <property type="term" value="F:unfolded protein binding"/>
    <property type="evidence" value="ECO:0007669"/>
    <property type="project" value="TreeGrafter"/>
</dbReference>
<dbReference type="GO" id="GO:0002088">
    <property type="term" value="P:lens development in camera-type eye"/>
    <property type="evidence" value="ECO:0007669"/>
    <property type="project" value="TreeGrafter"/>
</dbReference>
<dbReference type="GO" id="GO:0043066">
    <property type="term" value="P:negative regulation of apoptotic process"/>
    <property type="evidence" value="ECO:0007669"/>
    <property type="project" value="TreeGrafter"/>
</dbReference>
<dbReference type="GO" id="GO:0042026">
    <property type="term" value="P:protein refolding"/>
    <property type="evidence" value="ECO:0007669"/>
    <property type="project" value="TreeGrafter"/>
</dbReference>
<dbReference type="GO" id="GO:0009408">
    <property type="term" value="P:response to heat"/>
    <property type="evidence" value="ECO:0007669"/>
    <property type="project" value="TreeGrafter"/>
</dbReference>
<dbReference type="FunFam" id="2.60.40.790:FF:000008">
    <property type="entry name" value="Alpha-crystallin A chain"/>
    <property type="match status" value="1"/>
</dbReference>
<dbReference type="Gene3D" id="2.60.40.790">
    <property type="match status" value="1"/>
</dbReference>
<dbReference type="InterPro" id="IPR002068">
    <property type="entry name" value="A-crystallin/Hsp20_dom"/>
</dbReference>
<dbReference type="InterPro" id="IPR001436">
    <property type="entry name" value="Alpha-crystallin/sHSP_animal"/>
</dbReference>
<dbReference type="InterPro" id="IPR008978">
    <property type="entry name" value="HSP20-like_chaperone"/>
</dbReference>
<dbReference type="PANTHER" id="PTHR45640:SF14">
    <property type="entry name" value="ALPHA-CRYSTALLIN A CHAIN"/>
    <property type="match status" value="1"/>
</dbReference>
<dbReference type="PANTHER" id="PTHR45640">
    <property type="entry name" value="HEAT SHOCK PROTEIN HSP-12.2-RELATED"/>
    <property type="match status" value="1"/>
</dbReference>
<dbReference type="Pfam" id="PF00011">
    <property type="entry name" value="HSP20"/>
    <property type="match status" value="1"/>
</dbReference>
<dbReference type="PRINTS" id="PR00299">
    <property type="entry name" value="ACRYSTALLIN"/>
</dbReference>
<dbReference type="SUPFAM" id="SSF49764">
    <property type="entry name" value="HSP20-like chaperones"/>
    <property type="match status" value="1"/>
</dbReference>
<dbReference type="PROSITE" id="PS01031">
    <property type="entry name" value="SHSP"/>
    <property type="match status" value="1"/>
</dbReference>
<feature type="chain" id="PRO_0000125856" description="Alpha-crystallin A chain">
    <location>
        <begin position="1" status="less than"/>
        <end position="161"/>
    </location>
</feature>
<feature type="domain" description="sHSP" evidence="4">
    <location>
        <begin position="40"/>
        <end position="150"/>
    </location>
</feature>
<feature type="region of interest" description="Required for complex formation with BFSP1 and BFSP2" evidence="3">
    <location>
        <begin position="1" status="less than"/>
        <end position="51"/>
    </location>
</feature>
<feature type="region of interest" description="Disordered" evidence="5">
    <location>
        <begin position="140"/>
        <end position="161"/>
    </location>
</feature>
<feature type="compositionally biased region" description="Basic and acidic residues" evidence="5">
    <location>
        <begin position="141"/>
        <end position="155"/>
    </location>
</feature>
<feature type="binding site" evidence="2">
    <location>
        <position position="88"/>
    </location>
    <ligand>
        <name>Zn(2+)</name>
        <dbReference type="ChEBI" id="CHEBI:29105"/>
        <label>1</label>
    </ligand>
</feature>
<feature type="binding site" evidence="2">
    <location>
        <position position="90"/>
    </location>
    <ligand>
        <name>Zn(2+)</name>
        <dbReference type="ChEBI" id="CHEBI:29105"/>
        <label>1</label>
    </ligand>
</feature>
<feature type="binding site" evidence="2">
    <location>
        <position position="95"/>
    </location>
    <ligand>
        <name>Zn(2+)</name>
        <dbReference type="ChEBI" id="CHEBI:29105"/>
        <label>2</label>
    </ligand>
</feature>
<feature type="binding site" evidence="2">
    <location>
        <position position="142"/>
    </location>
    <ligand>
        <name>Zn(2+)</name>
        <dbReference type="ChEBI" id="CHEBI:29105"/>
        <label>3</label>
    </ligand>
</feature>
<feature type="modified residue" description="Deamidated glutamine; partial" evidence="1">
    <location>
        <position position="38"/>
    </location>
</feature>
<feature type="modified residue" description="N6-acetyllysine" evidence="3">
    <location>
        <position position="87"/>
    </location>
</feature>
<feature type="modified residue" description="Deamidated asparagine; partial" evidence="1">
    <location>
        <position position="89"/>
    </location>
</feature>
<feature type="modified residue" description="Phosphoserine" evidence="2">
    <location>
        <position position="110"/>
    </location>
</feature>
<feature type="modified residue" description="Deamidated asparagine; partial" evidence="1">
    <location>
        <position position="111"/>
    </location>
</feature>
<feature type="modified residue" description="Deamidated glutamine; partial" evidence="1">
    <location>
        <position position="135"/>
    </location>
</feature>
<feature type="glycosylation site" description="O-linked (GlcNAc) serine" evidence="1">
    <location>
        <position position="150"/>
    </location>
</feature>
<feature type="disulfide bond" evidence="3">
    <location>
        <begin position="119"/>
        <end position="130"/>
    </location>
</feature>
<feature type="non-terminal residue">
    <location>
        <position position="1"/>
    </location>
</feature>
<organism>
    <name type="scientific">Galegeeska rufescens</name>
    <name type="common">East African rufous sengi</name>
    <name type="synonym">Elephantulus rufescens</name>
    <dbReference type="NCBI Taxonomy" id="42151"/>
    <lineage>
        <taxon>Eukaryota</taxon>
        <taxon>Metazoa</taxon>
        <taxon>Chordata</taxon>
        <taxon>Craniata</taxon>
        <taxon>Vertebrata</taxon>
        <taxon>Euteleostomi</taxon>
        <taxon>Mammalia</taxon>
        <taxon>Eutheria</taxon>
        <taxon>Afrotheria</taxon>
        <taxon>Macroscelidea</taxon>
        <taxon>Macroscelididae</taxon>
        <taxon>Galegeeska</taxon>
    </lineage>
</organism>
<protein>
    <recommendedName>
        <fullName>Alpha-crystallin A chain</fullName>
    </recommendedName>
</protein>
<comment type="function">
    <text evidence="3">Contributes to the transparency and refractive index of the lens. In its oxidized form (absence of intramolecular disulfide bond), acts as a chaperone, preventing aggregation of various proteins under a wide range of stress conditions. Required for the correct formation of lens intermediate filaments as part of a complex composed of BFSP1, BFSP2 and CRYAA.</text>
</comment>
<comment type="subunit">
    <text evidence="2 3">Heteromer composed of three CRYAA and one CRYAB subunits. Inter-subunit bridging via zinc ions enhances stability, which is crucial as there is no protein turn over in the lens. Can also form homodimers and homotetramers (dimers of dimers) which serve as the building blocks of homooligomers (By similarity). Within homooligomers, the zinc-binding motif is created from residues of 3 different molecules. His-88 and Glu-90 from one molecule are ligands of the zinc ion, and His-95 and His-142 residues from additional molecules complete the site with tetrahedral coordination geometry (By similarity). Part of a complex required for lens intermediate filament formation composed of BFSP1, BFSP2 and CRYAA (By similarity).</text>
</comment>
<comment type="subcellular location">
    <subcellularLocation>
        <location evidence="3">Cytoplasm</location>
    </subcellularLocation>
    <subcellularLocation>
        <location evidence="3">Nucleus</location>
    </subcellularLocation>
    <text evidence="3">Translocates to the nucleus during heat shock and resides in sub-nuclear structures known as SC35 speckles or nuclear splicing speckles.</text>
</comment>
<comment type="PTM">
    <text evidence="3">Undergoes age-dependent proteolytical cleavage at the C-terminus.</text>
</comment>
<comment type="similarity">
    <text evidence="4">Belongs to the small heat shock protein (HSP20) family.</text>
</comment>
<keyword id="KW-0007">Acetylation</keyword>
<keyword id="KW-0143">Chaperone</keyword>
<keyword id="KW-0963">Cytoplasm</keyword>
<keyword id="KW-0903">Direct protein sequencing</keyword>
<keyword id="KW-1015">Disulfide bond</keyword>
<keyword id="KW-0273">Eye lens protein</keyword>
<keyword id="KW-0325">Glycoprotein</keyword>
<keyword id="KW-0479">Metal-binding</keyword>
<keyword id="KW-0488">Methylation</keyword>
<keyword id="KW-0539">Nucleus</keyword>
<keyword id="KW-0597">Phosphoprotein</keyword>
<keyword id="KW-0862">Zinc</keyword>
<accession>P82530</accession>
<name>CRYAA_GALRU</name>
<sequence>ALGPFYPSRXXXXXXXXXXXXXXXXXXXXXXXXXXXXQSLFRTVLDSGISEVRSDRDQFLILLDVKHFSPEDLTVKVLDDFVEIHGKHNERQDDHGYISREFHRRYRLPSNVDQSALSCSLSADGMLTFCGXXVQSGMDASHSERAIPVSREEKPSSAPSS</sequence>
<proteinExistence type="evidence at protein level"/>
<evidence type="ECO:0000250" key="1"/>
<evidence type="ECO:0000250" key="2">
    <source>
        <dbReference type="UniProtKB" id="P02470"/>
    </source>
</evidence>
<evidence type="ECO:0000250" key="3">
    <source>
        <dbReference type="UniProtKB" id="P02489"/>
    </source>
</evidence>
<evidence type="ECO:0000255" key="4">
    <source>
        <dbReference type="PROSITE-ProRule" id="PRU00285"/>
    </source>
</evidence>
<evidence type="ECO:0000256" key="5">
    <source>
        <dbReference type="SAM" id="MobiDB-lite"/>
    </source>
</evidence>